<organism>
    <name type="scientific">Mus musculus</name>
    <name type="common">Mouse</name>
    <dbReference type="NCBI Taxonomy" id="10090"/>
    <lineage>
        <taxon>Eukaryota</taxon>
        <taxon>Metazoa</taxon>
        <taxon>Chordata</taxon>
        <taxon>Craniata</taxon>
        <taxon>Vertebrata</taxon>
        <taxon>Euteleostomi</taxon>
        <taxon>Mammalia</taxon>
        <taxon>Eutheria</taxon>
        <taxon>Euarchontoglires</taxon>
        <taxon>Glires</taxon>
        <taxon>Rodentia</taxon>
        <taxon>Myomorpha</taxon>
        <taxon>Muroidea</taxon>
        <taxon>Muridae</taxon>
        <taxon>Murinae</taxon>
        <taxon>Mus</taxon>
        <taxon>Mus</taxon>
    </lineage>
</organism>
<reference key="1">
    <citation type="journal article" date="1991" name="Cell Growth Differ.">
        <title>Structure, mapping, and expression of fisp-12, a growth factor-inducible gene encoding a secreted cysteine-rich protein.</title>
        <authorList>
            <person name="Ryseck R.-P."/>
            <person name="Macdonald-Bravo H."/>
            <person name="Mattei M.-G."/>
            <person name="Bravo R."/>
        </authorList>
    </citation>
    <scope>NUCLEOTIDE SEQUENCE [GENOMIC DNA / MRNA]</scope>
</reference>
<reference key="2">
    <citation type="journal article" date="1991" name="DNA Cell Biol.">
        <title>Identification of a gene family regulated by transforming growth factor-beta.</title>
        <authorList>
            <person name="Brunner A."/>
            <person name="Chinn J."/>
            <person name="Neubauer M.G."/>
            <person name="Purchio A.F."/>
        </authorList>
    </citation>
    <scope>NUCLEOTIDE SEQUENCE [MRNA]</scope>
</reference>
<reference key="3">
    <citation type="journal article" date="2009" name="PLoS Biol.">
        <title>Lineage-specific biology revealed by a finished genome assembly of the mouse.</title>
        <authorList>
            <person name="Church D.M."/>
            <person name="Goodstadt L."/>
            <person name="Hillier L.W."/>
            <person name="Zody M.C."/>
            <person name="Goldstein S."/>
            <person name="She X."/>
            <person name="Bult C.J."/>
            <person name="Agarwala R."/>
            <person name="Cherry J.L."/>
            <person name="DiCuccio M."/>
            <person name="Hlavina W."/>
            <person name="Kapustin Y."/>
            <person name="Meric P."/>
            <person name="Maglott D."/>
            <person name="Birtle Z."/>
            <person name="Marques A.C."/>
            <person name="Graves T."/>
            <person name="Zhou S."/>
            <person name="Teague B."/>
            <person name="Potamousis K."/>
            <person name="Churas C."/>
            <person name="Place M."/>
            <person name="Herschleb J."/>
            <person name="Runnheim R."/>
            <person name="Forrest D."/>
            <person name="Amos-Landgraf J."/>
            <person name="Schwartz D.C."/>
            <person name="Cheng Z."/>
            <person name="Lindblad-Toh K."/>
            <person name="Eichler E.E."/>
            <person name="Ponting C.P."/>
        </authorList>
    </citation>
    <scope>NUCLEOTIDE SEQUENCE [LARGE SCALE GENOMIC DNA]</scope>
    <source>
        <strain>C57BL/6J</strain>
    </source>
</reference>
<reference key="4">
    <citation type="submission" date="2005-07" db="EMBL/GenBank/DDBJ databases">
        <authorList>
            <person name="Mural R.J."/>
            <person name="Adams M.D."/>
            <person name="Myers E.W."/>
            <person name="Smith H.O."/>
            <person name="Venter J.C."/>
        </authorList>
    </citation>
    <scope>NUCLEOTIDE SEQUENCE [LARGE SCALE GENOMIC DNA]</scope>
</reference>
<reference key="5">
    <citation type="journal article" date="2004" name="Genome Res.">
        <title>The status, quality, and expansion of the NIH full-length cDNA project: the Mammalian Gene Collection (MGC).</title>
        <authorList>
            <consortium name="The MGC Project Team"/>
        </authorList>
    </citation>
    <scope>NUCLEOTIDE SEQUENCE [LARGE SCALE MRNA]</scope>
</reference>
<reference key="6">
    <citation type="journal article" date="1997" name="Exp. Cell Res.">
        <title>Cyr61 and Fisp12 are both ECM-associated signaling molecules: activities, metabolism, and localization during development.</title>
        <authorList>
            <person name="Kireeva M.L."/>
            <person name="Latinkic B.V."/>
            <person name="Kolesnikova T.V."/>
            <person name="Chen C.-C."/>
            <person name="Yang G.P."/>
            <person name="Abler A.S."/>
            <person name="Lau L.F."/>
        </authorList>
    </citation>
    <scope>FUNCTION</scope>
    <scope>SUBCELLULAR LOCATION</scope>
</reference>
<reference key="7">
    <citation type="journal article" date="1999" name="Mol. Cell. Biol.">
        <title>Fisp12/mouse connective tissue growth factor mediates endothelial cell adhesion and migration through integrin alphavbeta3, promotes endothelial cell survival, and induces angiogenesis in vivo.</title>
        <authorList>
            <person name="Babic A.M."/>
            <person name="Chen C.-C."/>
            <person name="Lau L.F."/>
        </authorList>
    </citation>
    <scope>FUNCTION</scope>
</reference>
<reference key="8">
    <citation type="journal article" date="2019" name="J. Cell Commun. Signal.">
        <title>CCN2/CTGF binds the small leucine rich proteoglycan protein Tsukushi.</title>
        <authorList>
            <person name="Ohta K."/>
            <person name="Aoyama E."/>
            <person name="Ahmad S.A.I."/>
            <person name="Ito N."/>
            <person name="Anam M.B."/>
            <person name="Kubota S."/>
            <person name="Takigawa M."/>
        </authorList>
    </citation>
    <scope>INTERACTION WITH TSKU</scope>
</reference>
<reference key="9">
    <citation type="journal article" date="2024" name="Bone Res.">
        <title>A monoallelic variant in CCN2 causes an autosomal dominant spondyloepimetaphyseal dysplasia with low bone mass.</title>
        <authorList>
            <person name="Li S."/>
            <person name="Shao R."/>
            <person name="Li S."/>
            <person name="Zhao J."/>
            <person name="Deng Q."/>
            <person name="Li P."/>
            <person name="Wei Z."/>
            <person name="Xu S."/>
            <person name="Chen L."/>
            <person name="Li B."/>
            <person name="Zou W."/>
            <person name="Zhang Z."/>
        </authorList>
    </citation>
    <scope>FUNCTION</scope>
</reference>
<dbReference type="EMBL" id="M70641">
    <property type="protein sequence ID" value="AAA37627.1"/>
    <property type="molecule type" value="Genomic_DNA"/>
</dbReference>
<dbReference type="EMBL" id="M70642">
    <property type="protein sequence ID" value="AAA37628.1"/>
    <property type="molecule type" value="mRNA"/>
</dbReference>
<dbReference type="EMBL" id="M80263">
    <property type="protein sequence ID" value="AAA73135.1"/>
    <property type="molecule type" value="mRNA"/>
</dbReference>
<dbReference type="EMBL" id="AC099695">
    <property type="status" value="NOT_ANNOTATED_CDS"/>
    <property type="molecule type" value="Genomic_DNA"/>
</dbReference>
<dbReference type="EMBL" id="CH466540">
    <property type="protein sequence ID" value="EDL04783.1"/>
    <property type="molecule type" value="Genomic_DNA"/>
</dbReference>
<dbReference type="EMBL" id="BC006783">
    <property type="protein sequence ID" value="AAH06783.1"/>
    <property type="molecule type" value="mRNA"/>
</dbReference>
<dbReference type="CCDS" id="CCDS23751.1"/>
<dbReference type="PIR" id="A40578">
    <property type="entry name" value="A40578"/>
</dbReference>
<dbReference type="RefSeq" id="NP_034347.2">
    <property type="nucleotide sequence ID" value="NM_010217.2"/>
</dbReference>
<dbReference type="SMR" id="P29268"/>
<dbReference type="BioGRID" id="199679">
    <property type="interactions" value="4"/>
</dbReference>
<dbReference type="FunCoup" id="P29268">
    <property type="interactions" value="816"/>
</dbReference>
<dbReference type="IntAct" id="P29268">
    <property type="interactions" value="1"/>
</dbReference>
<dbReference type="STRING" id="10090.ENSMUSP00000020171"/>
<dbReference type="PhosphoSitePlus" id="P29268"/>
<dbReference type="CPTAC" id="non-CPTAC-3782"/>
<dbReference type="jPOST" id="P29268"/>
<dbReference type="PaxDb" id="10090-ENSMUSP00000020171"/>
<dbReference type="PeptideAtlas" id="P29268"/>
<dbReference type="ProteomicsDB" id="284143"/>
<dbReference type="Pumba" id="P29268"/>
<dbReference type="ABCD" id="P29268">
    <property type="antibodies" value="1 sequenced antibody"/>
</dbReference>
<dbReference type="Antibodypedia" id="3916">
    <property type="antibodies" value="1008 antibodies from 46 providers"/>
</dbReference>
<dbReference type="DNASU" id="14219"/>
<dbReference type="Ensembl" id="ENSMUST00000020171.12">
    <property type="protein sequence ID" value="ENSMUSP00000020171.6"/>
    <property type="gene ID" value="ENSMUSG00000019997.12"/>
</dbReference>
<dbReference type="GeneID" id="14219"/>
<dbReference type="KEGG" id="mmu:14219"/>
<dbReference type="UCSC" id="uc011xbr.1">
    <property type="organism name" value="mouse"/>
</dbReference>
<dbReference type="AGR" id="MGI:95537"/>
<dbReference type="CTD" id="1490"/>
<dbReference type="MGI" id="MGI:95537">
    <property type="gene designation" value="Ccn2"/>
</dbReference>
<dbReference type="VEuPathDB" id="HostDB:ENSMUSG00000019997"/>
<dbReference type="eggNOG" id="ENOG502QQDX">
    <property type="taxonomic scope" value="Eukaryota"/>
</dbReference>
<dbReference type="GeneTree" id="ENSGT00940000155019"/>
<dbReference type="HOGENOM" id="CLU_063247_1_0_1"/>
<dbReference type="InParanoid" id="P29268"/>
<dbReference type="OMA" id="ERDPCDH"/>
<dbReference type="OrthoDB" id="365605at2759"/>
<dbReference type="PhylomeDB" id="P29268"/>
<dbReference type="TreeFam" id="TF326070"/>
<dbReference type="BioGRID-ORCS" id="14219">
    <property type="hits" value="0 hits in 77 CRISPR screens"/>
</dbReference>
<dbReference type="ChiTaRS" id="Ccn2">
    <property type="organism name" value="mouse"/>
</dbReference>
<dbReference type="PRO" id="PR:P29268"/>
<dbReference type="Proteomes" id="UP000000589">
    <property type="component" value="Chromosome 10"/>
</dbReference>
<dbReference type="RNAct" id="P29268">
    <property type="molecule type" value="protein"/>
</dbReference>
<dbReference type="Bgee" id="ENSMUSG00000019997">
    <property type="expression patterns" value="Expressed in aorta tunica media and 348 other cell types or tissues"/>
</dbReference>
<dbReference type="ExpressionAtlas" id="P29268">
    <property type="expression patterns" value="baseline and differential"/>
</dbReference>
<dbReference type="GO" id="GO:0031012">
    <property type="term" value="C:extracellular matrix"/>
    <property type="evidence" value="ECO:0000314"/>
    <property type="project" value="MGI"/>
</dbReference>
<dbReference type="GO" id="GO:0005576">
    <property type="term" value="C:extracellular region"/>
    <property type="evidence" value="ECO:0000314"/>
    <property type="project" value="MGI"/>
</dbReference>
<dbReference type="GO" id="GO:0005615">
    <property type="term" value="C:extracellular space"/>
    <property type="evidence" value="ECO:0007005"/>
    <property type="project" value="BHF-UCL"/>
</dbReference>
<dbReference type="GO" id="GO:0005794">
    <property type="term" value="C:Golgi apparatus"/>
    <property type="evidence" value="ECO:0007669"/>
    <property type="project" value="Ensembl"/>
</dbReference>
<dbReference type="GO" id="GO:0008201">
    <property type="term" value="F:heparin binding"/>
    <property type="evidence" value="ECO:0000314"/>
    <property type="project" value="MGI"/>
</dbReference>
<dbReference type="GO" id="GO:0005178">
    <property type="term" value="F:integrin binding"/>
    <property type="evidence" value="ECO:0000314"/>
    <property type="project" value="MGI"/>
</dbReference>
<dbReference type="GO" id="GO:0001525">
    <property type="term" value="P:angiogenesis"/>
    <property type="evidence" value="ECO:0000314"/>
    <property type="project" value="MGI"/>
</dbReference>
<dbReference type="GO" id="GO:0001502">
    <property type="term" value="P:cartilage condensation"/>
    <property type="evidence" value="ECO:0000314"/>
    <property type="project" value="MGI"/>
</dbReference>
<dbReference type="GO" id="GO:0016477">
    <property type="term" value="P:cell migration"/>
    <property type="evidence" value="ECO:0000314"/>
    <property type="project" value="MGI"/>
</dbReference>
<dbReference type="GO" id="GO:0007160">
    <property type="term" value="P:cell-matrix adhesion"/>
    <property type="evidence" value="ECO:0000314"/>
    <property type="project" value="MGI"/>
</dbReference>
<dbReference type="GO" id="GO:0002062">
    <property type="term" value="P:chondrocyte differentiation"/>
    <property type="evidence" value="ECO:0000314"/>
    <property type="project" value="MGI"/>
</dbReference>
<dbReference type="GO" id="GO:0035988">
    <property type="term" value="P:chondrocyte proliferation"/>
    <property type="evidence" value="ECO:0000315"/>
    <property type="project" value="MGI"/>
</dbReference>
<dbReference type="GO" id="GO:0061448">
    <property type="term" value="P:connective tissue development"/>
    <property type="evidence" value="ECO:0000315"/>
    <property type="project" value="MGI"/>
</dbReference>
<dbReference type="GO" id="GO:0071897">
    <property type="term" value="P:DNA biosynthetic process"/>
    <property type="evidence" value="ECO:0007669"/>
    <property type="project" value="UniProtKB-KW"/>
</dbReference>
<dbReference type="GO" id="GO:0008543">
    <property type="term" value="P:fibroblast growth factor receptor signaling pathway"/>
    <property type="evidence" value="ECO:0000314"/>
    <property type="project" value="MGI"/>
</dbReference>
<dbReference type="GO" id="GO:0007229">
    <property type="term" value="P:integrin-mediated signaling pathway"/>
    <property type="evidence" value="ECO:0000314"/>
    <property type="project" value="MGI"/>
</dbReference>
<dbReference type="GO" id="GO:0030324">
    <property type="term" value="P:lung development"/>
    <property type="evidence" value="ECO:0000315"/>
    <property type="project" value="MGI"/>
</dbReference>
<dbReference type="GO" id="GO:0010629">
    <property type="term" value="P:negative regulation of gene expression"/>
    <property type="evidence" value="ECO:0000315"/>
    <property type="project" value="MGI"/>
</dbReference>
<dbReference type="GO" id="GO:0001503">
    <property type="term" value="P:ossification"/>
    <property type="evidence" value="ECO:0000315"/>
    <property type="project" value="MGI"/>
</dbReference>
<dbReference type="GO" id="GO:0045597">
    <property type="term" value="P:positive regulation of cell differentiation"/>
    <property type="evidence" value="ECO:0007669"/>
    <property type="project" value="Ensembl"/>
</dbReference>
<dbReference type="GO" id="GO:0070374">
    <property type="term" value="P:positive regulation of ERK1 and ERK2 cascade"/>
    <property type="evidence" value="ECO:0007669"/>
    <property type="project" value="Ensembl"/>
</dbReference>
<dbReference type="GO" id="GO:0046330">
    <property type="term" value="P:positive regulation of JNK cascade"/>
    <property type="evidence" value="ECO:0007669"/>
    <property type="project" value="Ensembl"/>
</dbReference>
<dbReference type="GO" id="GO:0051496">
    <property type="term" value="P:positive regulation of stress fiber assembly"/>
    <property type="evidence" value="ECO:0007669"/>
    <property type="project" value="Ensembl"/>
</dbReference>
<dbReference type="GO" id="GO:0072593">
    <property type="term" value="P:reactive oxygen species metabolic process"/>
    <property type="evidence" value="ECO:0000314"/>
    <property type="project" value="MGI"/>
</dbReference>
<dbReference type="GO" id="GO:0032330">
    <property type="term" value="P:regulation of chondrocyte differentiation"/>
    <property type="evidence" value="ECO:0000315"/>
    <property type="project" value="MGI"/>
</dbReference>
<dbReference type="GO" id="GO:0001894">
    <property type="term" value="P:tissue homeostasis"/>
    <property type="evidence" value="ECO:0000315"/>
    <property type="project" value="MGI"/>
</dbReference>
<dbReference type="FunFam" id="2.20.100.10:FF:000036">
    <property type="entry name" value="Connective tissue growth factor (Predicted)"/>
    <property type="match status" value="1"/>
</dbReference>
<dbReference type="Gene3D" id="2.20.100.10">
    <property type="entry name" value="Thrombospondin type-1 (TSP1) repeat"/>
    <property type="match status" value="1"/>
</dbReference>
<dbReference type="InterPro" id="IPR050941">
    <property type="entry name" value="CCN"/>
</dbReference>
<dbReference type="InterPro" id="IPR006207">
    <property type="entry name" value="Cys_knot_C"/>
</dbReference>
<dbReference type="InterPro" id="IPR006208">
    <property type="entry name" value="Glyco_hormone_CN"/>
</dbReference>
<dbReference type="InterPro" id="IPR009030">
    <property type="entry name" value="Growth_fac_rcpt_cys_sf"/>
</dbReference>
<dbReference type="InterPro" id="IPR000867">
    <property type="entry name" value="IGFBP-like"/>
</dbReference>
<dbReference type="InterPro" id="IPR012395">
    <property type="entry name" value="IGFBP_CNN"/>
</dbReference>
<dbReference type="InterPro" id="IPR017891">
    <property type="entry name" value="Insulin_GF-bd_Cys-rich_CS"/>
</dbReference>
<dbReference type="InterPro" id="IPR043973">
    <property type="entry name" value="TSP1_CCN"/>
</dbReference>
<dbReference type="InterPro" id="IPR000884">
    <property type="entry name" value="TSP1_rpt"/>
</dbReference>
<dbReference type="InterPro" id="IPR036383">
    <property type="entry name" value="TSP1_rpt_sf"/>
</dbReference>
<dbReference type="InterPro" id="IPR001007">
    <property type="entry name" value="VWF_dom"/>
</dbReference>
<dbReference type="PANTHER" id="PTHR11348:SF7">
    <property type="entry name" value="CCN FAMILY MEMBER 2"/>
    <property type="match status" value="1"/>
</dbReference>
<dbReference type="PANTHER" id="PTHR11348">
    <property type="entry name" value="CONNECTIVE TISSUE GROWTH FACTOR-RELATED"/>
    <property type="match status" value="1"/>
</dbReference>
<dbReference type="Pfam" id="PF00007">
    <property type="entry name" value="Cys_knot"/>
    <property type="match status" value="1"/>
</dbReference>
<dbReference type="Pfam" id="PF00219">
    <property type="entry name" value="IGFBP"/>
    <property type="match status" value="1"/>
</dbReference>
<dbReference type="Pfam" id="PF19035">
    <property type="entry name" value="TSP1_CCN"/>
    <property type="match status" value="1"/>
</dbReference>
<dbReference type="Pfam" id="PF00093">
    <property type="entry name" value="VWC"/>
    <property type="match status" value="1"/>
</dbReference>
<dbReference type="PIRSF" id="PIRSF036495">
    <property type="entry name" value="IGFBP_rP_CNN"/>
    <property type="match status" value="1"/>
</dbReference>
<dbReference type="SMART" id="SM00041">
    <property type="entry name" value="CT"/>
    <property type="match status" value="1"/>
</dbReference>
<dbReference type="SMART" id="SM00121">
    <property type="entry name" value="IB"/>
    <property type="match status" value="1"/>
</dbReference>
<dbReference type="SMART" id="SM00209">
    <property type="entry name" value="TSP1"/>
    <property type="match status" value="1"/>
</dbReference>
<dbReference type="SMART" id="SM00214">
    <property type="entry name" value="VWC"/>
    <property type="match status" value="1"/>
</dbReference>
<dbReference type="SUPFAM" id="SSF57603">
    <property type="entry name" value="FnI-like domain"/>
    <property type="match status" value="1"/>
</dbReference>
<dbReference type="SUPFAM" id="SSF57184">
    <property type="entry name" value="Growth factor receptor domain"/>
    <property type="match status" value="1"/>
</dbReference>
<dbReference type="SUPFAM" id="SSF82895">
    <property type="entry name" value="TSP-1 type 1 repeat"/>
    <property type="match status" value="1"/>
</dbReference>
<dbReference type="PROSITE" id="PS01185">
    <property type="entry name" value="CTCK_1"/>
    <property type="match status" value="1"/>
</dbReference>
<dbReference type="PROSITE" id="PS01225">
    <property type="entry name" value="CTCK_2"/>
    <property type="match status" value="1"/>
</dbReference>
<dbReference type="PROSITE" id="PS00222">
    <property type="entry name" value="IGFBP_N_1"/>
    <property type="match status" value="1"/>
</dbReference>
<dbReference type="PROSITE" id="PS51323">
    <property type="entry name" value="IGFBP_N_2"/>
    <property type="match status" value="1"/>
</dbReference>
<dbReference type="PROSITE" id="PS50092">
    <property type="entry name" value="TSP1"/>
    <property type="match status" value="1"/>
</dbReference>
<dbReference type="PROSITE" id="PS01208">
    <property type="entry name" value="VWFC_1"/>
    <property type="match status" value="1"/>
</dbReference>
<dbReference type="PROSITE" id="PS50184">
    <property type="entry name" value="VWFC_2"/>
    <property type="match status" value="1"/>
</dbReference>
<proteinExistence type="evidence at protein level"/>
<keyword id="KW-0130">Cell adhesion</keyword>
<keyword id="KW-1015">Disulfide bond</keyword>
<keyword id="KW-0237">DNA synthesis</keyword>
<keyword id="KW-0272">Extracellular matrix</keyword>
<keyword id="KW-0358">Heparin-binding</keyword>
<keyword id="KW-1185">Reference proteome</keyword>
<keyword id="KW-0964">Secreted</keyword>
<keyword id="KW-0732">Signal</keyword>
<name>CCN2_MOUSE</name>
<accession>P29268</accession>
<accession>G5E830</accession>
<accession>Q922U0</accession>
<evidence type="ECO:0000250" key="1"/>
<evidence type="ECO:0000250" key="2">
    <source>
        <dbReference type="UniProtKB" id="P29279"/>
    </source>
</evidence>
<evidence type="ECO:0000255" key="3"/>
<evidence type="ECO:0000255" key="4">
    <source>
        <dbReference type="PROSITE-ProRule" id="PRU00039"/>
    </source>
</evidence>
<evidence type="ECO:0000255" key="5">
    <source>
        <dbReference type="PROSITE-ProRule" id="PRU00210"/>
    </source>
</evidence>
<evidence type="ECO:0000255" key="6">
    <source>
        <dbReference type="PROSITE-ProRule" id="PRU00220"/>
    </source>
</evidence>
<evidence type="ECO:0000255" key="7">
    <source>
        <dbReference type="PROSITE-ProRule" id="PRU00653"/>
    </source>
</evidence>
<evidence type="ECO:0000269" key="8">
    <source>
    </source>
</evidence>
<evidence type="ECO:0000269" key="9">
    <source>
    </source>
</evidence>
<evidence type="ECO:0000269" key="10">
    <source>
    </source>
</evidence>
<evidence type="ECO:0000269" key="11">
    <source>
    </source>
</evidence>
<evidence type="ECO:0000303" key="12">
    <source>
    </source>
</evidence>
<evidence type="ECO:0000303" key="13">
    <source>
    </source>
</evidence>
<evidence type="ECO:0000303" key="14">
    <source>
    </source>
</evidence>
<evidence type="ECO:0000305" key="15"/>
<evidence type="ECO:0000312" key="16">
    <source>
        <dbReference type="MGI" id="MGI:95537"/>
    </source>
</evidence>
<protein>
    <recommendedName>
        <fullName>CCN family member 2</fullName>
    </recommendedName>
    <alternativeName>
        <fullName>Cellular communication network factor 2</fullName>
    </alternativeName>
    <alternativeName>
        <fullName>Connective tissue growth factor</fullName>
    </alternativeName>
    <alternativeName>
        <fullName>Hypertrophic chondrocyte-specific protein 24</fullName>
    </alternativeName>
    <alternativeName>
        <fullName>Protein FISP-12</fullName>
    </alternativeName>
</protein>
<feature type="signal peptide" evidence="3">
    <location>
        <begin position="1"/>
        <end position="25"/>
    </location>
</feature>
<feature type="chain" id="PRO_0000014403" description="CCN family member 2">
    <location>
        <begin position="26"/>
        <end position="348"/>
    </location>
</feature>
<feature type="domain" description="IGFBP N-terminal" evidence="7">
    <location>
        <begin position="26"/>
        <end position="97"/>
    </location>
</feature>
<feature type="domain" description="VWFC" evidence="6">
    <location>
        <begin position="100"/>
        <end position="166"/>
    </location>
</feature>
<feature type="domain" description="TSP type-1" evidence="5">
    <location>
        <begin position="197"/>
        <end position="242"/>
    </location>
</feature>
<feature type="domain" description="CTCK" evidence="4">
    <location>
        <begin position="255"/>
        <end position="329"/>
    </location>
</feature>
<feature type="region of interest" description="Heparin-binding" evidence="2">
    <location>
        <begin position="246"/>
        <end position="348"/>
    </location>
</feature>
<feature type="disulfide bond" evidence="7">
    <location>
        <begin position="28"/>
        <end position="53"/>
    </location>
</feature>
<feature type="disulfide bond" evidence="7">
    <location>
        <begin position="32"/>
        <end position="55"/>
    </location>
</feature>
<feature type="disulfide bond" evidence="7">
    <location>
        <begin position="34"/>
        <end position="56"/>
    </location>
</feature>
<feature type="disulfide bond" evidence="7">
    <location>
        <begin position="42"/>
        <end position="59"/>
    </location>
</feature>
<feature type="disulfide bond" evidence="7">
    <location>
        <begin position="67"/>
        <end position="81"/>
    </location>
</feature>
<feature type="disulfide bond" evidence="7">
    <location>
        <begin position="73"/>
        <end position="94"/>
    </location>
</feature>
<feature type="disulfide bond" evidence="1">
    <location>
        <begin position="255"/>
        <end position="292"/>
    </location>
</feature>
<feature type="disulfide bond" evidence="1">
    <location>
        <begin position="272"/>
        <end position="306"/>
    </location>
</feature>
<feature type="disulfide bond" evidence="1">
    <location>
        <begin position="283"/>
        <end position="322"/>
    </location>
</feature>
<feature type="disulfide bond" evidence="1">
    <location>
        <begin position="286"/>
        <end position="324"/>
    </location>
</feature>
<feature type="disulfide bond" evidence="1">
    <location>
        <begin position="291"/>
        <end position="328"/>
    </location>
</feature>
<feature type="sequence conflict" description="In Ref. 1; AAA37627/AAA37628, 2; AAA73135 and 5; AAH06783." evidence="15" ref="1 2 5">
    <original>M</original>
    <variation>T</variation>
    <location>
        <position position="24"/>
    </location>
</feature>
<feature type="sequence conflict" description="In Ref. 1; AAA37627/AAA37628." evidence="15" ref="1">
    <original>E</original>
    <variation>K</variation>
    <location>
        <position position="161"/>
    </location>
</feature>
<sequence>MLASVAGPISLALVLLALCTRPAMGQDCSAQCQCAAEAAPHCPAGVSLVLDGCGCCRVCAKQLGELCTERDPCDPHKGLFCDFGSPANRKIGVCTAKDGAPCVFGGSVYRSGESFQSSCKYQCTCLDGAVGCVPLCSMDVRLPSPDCPFPRRVKLPGKCCEEWVCDEPKDRTAVGPALAAYRLEDTFGPDPTMMRANCLVQTTEWSACSKTCGMGISTRVTNDNTFCRLEKQSRLCMVRPCEADLEENIKKGKKCIRTPKIAKPVKFELSGCTSVKTYRAKFCGVCTDGRCCTPHRTTTLPVEFKCPDGEIMKKNMMFIKTCACHYNCPGDNDIFESLYYRKMYGDMA</sequence>
<comment type="function">
    <text evidence="2 8 10 11">Major connective tissue mitoattractant secreted by vascular endothelial cells. Promotes proliferation and differentiation of chondrocytes (By similarity). Is involved in the stimulation of osteoblast differentiation and has a critical role in osteogenesis (PubMed:39414788). Mediates heparin- and divalent cation-dependent cell adhesion in many cell types including fibroblasts, myofibroblasts, endothelial and epithelial cells (By similarity). Enhances fibroblast growth factor-induced DNA synthesis (By similarity).</text>
</comment>
<comment type="subunit">
    <text evidence="2 9">Monomer (By similarity). Interacts with TSKU (PubMed:30232710).</text>
</comment>
<comment type="subcellular location">
    <subcellularLocation>
        <location evidence="11">Secreted</location>
        <location evidence="11">Extracellular space</location>
        <location evidence="11">Extracellular matrix</location>
    </subcellularLocation>
    <subcellularLocation>
        <location evidence="11">Secreted</location>
    </subcellularLocation>
</comment>
<comment type="tissue specificity">
    <text>Testis, spleen, kidney, lung, heart, and brain (lowest level in testis and highest in lung).</text>
</comment>
<comment type="induction">
    <text>By growth factors.</text>
</comment>
<comment type="similarity">
    <text evidence="15">Belongs to the CCN family.</text>
</comment>
<gene>
    <name evidence="16" type="primary">Ccn2</name>
    <name evidence="14" type="synonym">betaIG-M2</name>
    <name type="synonym">Ctgf</name>
    <name evidence="13" type="synonym">Fisp-12</name>
    <name evidence="12" type="synonym">Fisp12</name>
    <name type="synonym">Hcs24</name>
</gene>